<reference key="1">
    <citation type="journal article" date="1986" name="J. Bacteriol.">
        <title>Nucleotide sequence of the tra YALE region from IncFV plasmid pED208.</title>
        <authorList>
            <person name="Finlay B.B."/>
            <person name="Frost L.S."/>
            <person name="Paranchych W."/>
        </authorList>
    </citation>
    <scope>NUCLEOTIDE SEQUENCE [GENOMIC DNA]</scope>
</reference>
<reference key="2">
    <citation type="journal article" date="1983" name="J. Bacteriol.">
        <title>N-terminal amino acid sequencing of EDP208 conjugative pili.</title>
        <authorList>
            <person name="Frost L.S."/>
            <person name="Armstrong G.D."/>
            <person name="Finlay B.B."/>
            <person name="Edwards B.F.P."/>
            <person name="Paranchych W."/>
        </authorList>
    </citation>
    <scope>PROTEIN SEQUENCE OF 56-67</scope>
    <scope>ACETYLATION AT THR-56</scope>
</reference>
<dbReference type="EMBL" id="M14733">
    <property type="protein sequence ID" value="AAA25607.1"/>
    <property type="molecule type" value="Genomic_DNA"/>
</dbReference>
<dbReference type="RefSeq" id="WP_032490352.1">
    <property type="nucleotide sequence ID" value="NZ_AF411480.1"/>
</dbReference>
<dbReference type="PDB" id="5LEG">
    <property type="method" value="EM"/>
    <property type="resolution" value="3.60 A"/>
    <property type="chains" value="1A/1B/1C/1D/1E/1F/1G/1H/1I/1J/1K/1L/1M/1N/1O/1P/2A/2B/2C/2D/2E/2F/2G/2H/2I/2J/2K/2L/2M/2N=57-119"/>
</dbReference>
<dbReference type="PDBsum" id="5LEG"/>
<dbReference type="EMDB" id="EMD-4042"/>
<dbReference type="SMR" id="P12060"/>
<dbReference type="iPTMnet" id="P12060"/>
<dbReference type="GO" id="GO:0005576">
    <property type="term" value="C:extracellular region"/>
    <property type="evidence" value="ECO:0007669"/>
    <property type="project" value="UniProtKB-SubCell"/>
</dbReference>
<dbReference type="GO" id="GO:0005886">
    <property type="term" value="C:plasma membrane"/>
    <property type="evidence" value="ECO:0007669"/>
    <property type="project" value="UniProtKB-SubCell"/>
</dbReference>
<dbReference type="InterPro" id="IPR008873">
    <property type="entry name" value="TraA"/>
</dbReference>
<dbReference type="NCBIfam" id="TIGR02758">
    <property type="entry name" value="TraA_TIGR"/>
    <property type="match status" value="1"/>
</dbReference>
<dbReference type="Pfam" id="PF05513">
    <property type="entry name" value="TraA"/>
    <property type="match status" value="1"/>
</dbReference>
<geneLocation type="plasmid">
    <name>IncFV pED208</name>
</geneLocation>
<organism>
    <name type="scientific">Salmonella typhi</name>
    <dbReference type="NCBI Taxonomy" id="90370"/>
    <lineage>
        <taxon>Bacteria</taxon>
        <taxon>Pseudomonadati</taxon>
        <taxon>Pseudomonadota</taxon>
        <taxon>Gammaproteobacteria</taxon>
        <taxon>Enterobacterales</taxon>
        <taxon>Enterobacteriaceae</taxon>
        <taxon>Salmonella</taxon>
    </lineage>
</organism>
<evidence type="ECO:0000250" key="1"/>
<evidence type="ECO:0000255" key="2"/>
<evidence type="ECO:0000269" key="3">
    <source>
    </source>
</evidence>
<evidence type="ECO:0000305" key="4"/>
<keyword id="KW-0002">3D-structure</keyword>
<keyword id="KW-0007">Acetylation</keyword>
<keyword id="KW-0997">Cell inner membrane</keyword>
<keyword id="KW-1003">Cell membrane</keyword>
<keyword id="KW-0184">Conjugation</keyword>
<keyword id="KW-0903">Direct protein sequencing</keyword>
<keyword id="KW-0472">Membrane</keyword>
<keyword id="KW-0614">Plasmid</keyword>
<keyword id="KW-0964">Secreted</keyword>
<keyword id="KW-0812">Transmembrane</keyword>
<keyword id="KW-1133">Transmembrane helix</keyword>
<feature type="propeptide" id="PRO_0000024498" description="Leader peptide; cleaved by LepB" evidence="3">
    <location>
        <begin position="1"/>
        <end position="55"/>
    </location>
</feature>
<feature type="chain" id="PRO_0000024499" description="Pilin">
    <location>
        <begin position="56"/>
        <end position="119"/>
    </location>
</feature>
<feature type="topological domain" description="Periplasmic" evidence="1">
    <location>
        <begin position="1"/>
        <end position="69"/>
    </location>
</feature>
<feature type="transmembrane region" description="Helical" evidence="2">
    <location>
        <begin position="70"/>
        <end position="90"/>
    </location>
</feature>
<feature type="topological domain" description="Cytoplasmic" evidence="1">
    <location>
        <begin position="91"/>
        <end position="97"/>
    </location>
</feature>
<feature type="transmembrane region" description="Helical" evidence="2">
    <location>
        <begin position="98"/>
        <end position="119"/>
    </location>
</feature>
<feature type="modified residue" description="N-acetylthreonine" evidence="3">
    <location>
        <position position="56"/>
    </location>
</feature>
<feature type="sequence conflict" description="In Ref. 2; AA sequence." evidence="4" ref="2">
    <original>DV</original>
    <variation>VD</variation>
    <location>
        <begin position="65"/>
        <end position="66"/>
    </location>
</feature>
<proteinExistence type="evidence at protein level"/>
<gene>
    <name type="primary">traA</name>
</gene>
<protein>
    <recommendedName>
        <fullName>Pilin</fullName>
    </recommendedName>
</protein>
<comment type="function">
    <text evidence="1">Propilin is the precursor of the pilus subunit, pilin, that forms conjugative pili, the filamentous surface appendages required for cell-to-cell contact during the earlier stages of bacterial conjugation, and that retract after contact is established. Mature pilin is assembled with the help of TraQ and TraX (By similarity).</text>
</comment>
<comment type="subunit">
    <text evidence="1">Monomer. Interacts with itself to form filaments; also interacts with TraQ (By similarity).</text>
</comment>
<comment type="subcellular location">
    <subcellularLocation>
        <location>Cell inner membrane</location>
        <topology>Multi-pass membrane protein</topology>
    </subcellularLocation>
    <subcellularLocation>
        <location evidence="1">Secreted</location>
    </subcellularLocation>
    <text evidence="1">Propilin is directed to the inner membrane, where it is cleaved and acetylated. Mature pilin forms filaments that are secreted to form the conjugative pilus (By similarity).</text>
</comment>
<comment type="similarity">
    <text evidence="4">Belongs to the TraA family.</text>
</comment>
<name>PIL1_SALTI</name>
<accession>P12060</accession>
<sequence length="119" mass="12688">MNLSFAKGGLPAPVKNRAWQYCQMAWRGVTSKKALSRLAALSPLLLLGVGQMASATDLLAGGKDDVKATFGADSFVMMCIIIAELIVGVAMYIRTKNLLILLGLVVVIVFTTVGLTFIK</sequence>